<sequence>MARRRQAEVRPLQPDLVYQDVLVSAMINRIMEDGKKNLASRIFYGACRLVQERTGQEPLKVFKQAYDNIKPRVEVRSRRVGGSTYQVPVEVSARRQQSLTLRWMMSAVDGRPERTAIERLAGEIMDAAQGRGGAIKKKDDVERMAEANRAYAHYRW</sequence>
<comment type="function">
    <text evidence="1">One of the primary rRNA binding proteins, it binds directly to 16S rRNA where it nucleates assembly of the head domain of the 30S subunit. Is located at the subunit interface close to the decoding center, probably blocks exit of the E-site tRNA.</text>
</comment>
<comment type="subunit">
    <text evidence="1">Part of the 30S ribosomal subunit. Contacts proteins S9 and S11.</text>
</comment>
<comment type="similarity">
    <text evidence="1">Belongs to the universal ribosomal protein uS7 family.</text>
</comment>
<gene>
    <name evidence="1" type="primary">rpsG</name>
    <name type="ordered locus">Deide_19000</name>
</gene>
<name>RS7_DEIDV</name>
<reference key="1">
    <citation type="journal article" date="2009" name="PLoS Genet.">
        <title>Alliance of proteomics and genomics to unravel the specificities of Sahara bacterium Deinococcus deserti.</title>
        <authorList>
            <person name="de Groot A."/>
            <person name="Dulermo R."/>
            <person name="Ortet P."/>
            <person name="Blanchard L."/>
            <person name="Guerin P."/>
            <person name="Fernandez B."/>
            <person name="Vacherie B."/>
            <person name="Dossat C."/>
            <person name="Jolivet E."/>
            <person name="Siguier P."/>
            <person name="Chandler M."/>
            <person name="Barakat M."/>
            <person name="Dedieu A."/>
            <person name="Barbe V."/>
            <person name="Heulin T."/>
            <person name="Sommer S."/>
            <person name="Achouak W."/>
            <person name="Armengaud J."/>
        </authorList>
    </citation>
    <scope>NUCLEOTIDE SEQUENCE [LARGE SCALE GENOMIC DNA]</scope>
    <source>
        <strain>DSM 17065 / CIP 109153 / LMG 22923 / VCD115</strain>
    </source>
</reference>
<keyword id="KW-1185">Reference proteome</keyword>
<keyword id="KW-0687">Ribonucleoprotein</keyword>
<keyword id="KW-0689">Ribosomal protein</keyword>
<keyword id="KW-0694">RNA-binding</keyword>
<keyword id="KW-0699">rRNA-binding</keyword>
<keyword id="KW-0820">tRNA-binding</keyword>
<feature type="chain" id="PRO_1000206397" description="Small ribosomal subunit protein uS7">
    <location>
        <begin position="1"/>
        <end position="156"/>
    </location>
</feature>
<dbReference type="EMBL" id="CP001114">
    <property type="protein sequence ID" value="ACO46888.1"/>
    <property type="molecule type" value="Genomic_DNA"/>
</dbReference>
<dbReference type="RefSeq" id="WP_012694009.1">
    <property type="nucleotide sequence ID" value="NC_012526.1"/>
</dbReference>
<dbReference type="SMR" id="C1CXH1"/>
<dbReference type="STRING" id="546414.Deide_19000"/>
<dbReference type="PaxDb" id="546414-Deide_19000"/>
<dbReference type="KEGG" id="ddr:Deide_19000"/>
<dbReference type="eggNOG" id="COG0049">
    <property type="taxonomic scope" value="Bacteria"/>
</dbReference>
<dbReference type="HOGENOM" id="CLU_072226_1_1_0"/>
<dbReference type="OrthoDB" id="9807653at2"/>
<dbReference type="Proteomes" id="UP000002208">
    <property type="component" value="Chromosome"/>
</dbReference>
<dbReference type="GO" id="GO:0015935">
    <property type="term" value="C:small ribosomal subunit"/>
    <property type="evidence" value="ECO:0007669"/>
    <property type="project" value="InterPro"/>
</dbReference>
<dbReference type="GO" id="GO:0019843">
    <property type="term" value="F:rRNA binding"/>
    <property type="evidence" value="ECO:0007669"/>
    <property type="project" value="UniProtKB-UniRule"/>
</dbReference>
<dbReference type="GO" id="GO:0003735">
    <property type="term" value="F:structural constituent of ribosome"/>
    <property type="evidence" value="ECO:0007669"/>
    <property type="project" value="InterPro"/>
</dbReference>
<dbReference type="GO" id="GO:0000049">
    <property type="term" value="F:tRNA binding"/>
    <property type="evidence" value="ECO:0007669"/>
    <property type="project" value="UniProtKB-UniRule"/>
</dbReference>
<dbReference type="GO" id="GO:0006412">
    <property type="term" value="P:translation"/>
    <property type="evidence" value="ECO:0007669"/>
    <property type="project" value="UniProtKB-UniRule"/>
</dbReference>
<dbReference type="CDD" id="cd14869">
    <property type="entry name" value="uS7_Bacteria"/>
    <property type="match status" value="1"/>
</dbReference>
<dbReference type="FunFam" id="1.10.455.10:FF:000001">
    <property type="entry name" value="30S ribosomal protein S7"/>
    <property type="match status" value="1"/>
</dbReference>
<dbReference type="Gene3D" id="1.10.455.10">
    <property type="entry name" value="Ribosomal protein S7 domain"/>
    <property type="match status" value="1"/>
</dbReference>
<dbReference type="HAMAP" id="MF_00480_B">
    <property type="entry name" value="Ribosomal_uS7_B"/>
    <property type="match status" value="1"/>
</dbReference>
<dbReference type="InterPro" id="IPR000235">
    <property type="entry name" value="Ribosomal_uS7"/>
</dbReference>
<dbReference type="InterPro" id="IPR005717">
    <property type="entry name" value="Ribosomal_uS7_bac/org-type"/>
</dbReference>
<dbReference type="InterPro" id="IPR020606">
    <property type="entry name" value="Ribosomal_uS7_CS"/>
</dbReference>
<dbReference type="InterPro" id="IPR023798">
    <property type="entry name" value="Ribosomal_uS7_dom"/>
</dbReference>
<dbReference type="InterPro" id="IPR036823">
    <property type="entry name" value="Ribosomal_uS7_dom_sf"/>
</dbReference>
<dbReference type="NCBIfam" id="TIGR01029">
    <property type="entry name" value="rpsG_bact"/>
    <property type="match status" value="1"/>
</dbReference>
<dbReference type="PANTHER" id="PTHR11205">
    <property type="entry name" value="RIBOSOMAL PROTEIN S7"/>
    <property type="match status" value="1"/>
</dbReference>
<dbReference type="Pfam" id="PF00177">
    <property type="entry name" value="Ribosomal_S7"/>
    <property type="match status" value="1"/>
</dbReference>
<dbReference type="PIRSF" id="PIRSF002122">
    <property type="entry name" value="RPS7p_RPS7a_RPS5e_RPS7o"/>
    <property type="match status" value="1"/>
</dbReference>
<dbReference type="SUPFAM" id="SSF47973">
    <property type="entry name" value="Ribosomal protein S7"/>
    <property type="match status" value="1"/>
</dbReference>
<dbReference type="PROSITE" id="PS00052">
    <property type="entry name" value="RIBOSOMAL_S7"/>
    <property type="match status" value="1"/>
</dbReference>
<protein>
    <recommendedName>
        <fullName evidence="1">Small ribosomal subunit protein uS7</fullName>
    </recommendedName>
    <alternativeName>
        <fullName evidence="2">30S ribosomal protein S7</fullName>
    </alternativeName>
</protein>
<proteinExistence type="inferred from homology"/>
<accession>C1CXH1</accession>
<organism>
    <name type="scientific">Deinococcus deserti (strain DSM 17065 / CIP 109153 / LMG 22923 / VCD115)</name>
    <dbReference type="NCBI Taxonomy" id="546414"/>
    <lineage>
        <taxon>Bacteria</taxon>
        <taxon>Thermotogati</taxon>
        <taxon>Deinococcota</taxon>
        <taxon>Deinococci</taxon>
        <taxon>Deinococcales</taxon>
        <taxon>Deinococcaceae</taxon>
        <taxon>Deinococcus</taxon>
    </lineage>
</organism>
<evidence type="ECO:0000255" key="1">
    <source>
        <dbReference type="HAMAP-Rule" id="MF_00480"/>
    </source>
</evidence>
<evidence type="ECO:0000305" key="2"/>